<feature type="chain" id="PRO_1000129324" description="Ribonuclease PH">
    <location>
        <begin position="1"/>
        <end position="238"/>
    </location>
</feature>
<feature type="binding site" evidence="1">
    <location>
        <position position="86"/>
    </location>
    <ligand>
        <name>phosphate</name>
        <dbReference type="ChEBI" id="CHEBI:43474"/>
        <note>substrate</note>
    </ligand>
</feature>
<feature type="binding site" evidence="1">
    <location>
        <begin position="124"/>
        <end position="126"/>
    </location>
    <ligand>
        <name>phosphate</name>
        <dbReference type="ChEBI" id="CHEBI:43474"/>
        <note>substrate</note>
    </ligand>
</feature>
<keyword id="KW-0548">Nucleotidyltransferase</keyword>
<keyword id="KW-0694">RNA-binding</keyword>
<keyword id="KW-0698">rRNA processing</keyword>
<keyword id="KW-0808">Transferase</keyword>
<keyword id="KW-0819">tRNA processing</keyword>
<keyword id="KW-0820">tRNA-binding</keyword>
<reference key="1">
    <citation type="journal article" date="2008" name="PLoS ONE">
        <title>Genome sequence of Brucella abortus vaccine strain S19 compared to virulent strains yields candidate virulence genes.</title>
        <authorList>
            <person name="Crasta O.R."/>
            <person name="Folkerts O."/>
            <person name="Fei Z."/>
            <person name="Mane S.P."/>
            <person name="Evans C."/>
            <person name="Martino-Catt S."/>
            <person name="Bricker B."/>
            <person name="Yu G."/>
            <person name="Du L."/>
            <person name="Sobral B.W."/>
        </authorList>
    </citation>
    <scope>NUCLEOTIDE SEQUENCE [LARGE SCALE GENOMIC DNA]</scope>
    <source>
        <strain>S19</strain>
    </source>
</reference>
<dbReference type="EC" id="2.7.7.56" evidence="1"/>
<dbReference type="EMBL" id="CP000887">
    <property type="protein sequence ID" value="ACD71717.1"/>
    <property type="molecule type" value="Genomic_DNA"/>
</dbReference>
<dbReference type="RefSeq" id="WP_002965421.1">
    <property type="nucleotide sequence ID" value="NC_010742.1"/>
</dbReference>
<dbReference type="SMR" id="B2S8G4"/>
<dbReference type="GeneID" id="97534418"/>
<dbReference type="KEGG" id="bmc:BAbS19_I01630"/>
<dbReference type="HOGENOM" id="CLU_050858_0_0_5"/>
<dbReference type="Proteomes" id="UP000002565">
    <property type="component" value="Chromosome 1"/>
</dbReference>
<dbReference type="GO" id="GO:0000175">
    <property type="term" value="F:3'-5'-RNA exonuclease activity"/>
    <property type="evidence" value="ECO:0007669"/>
    <property type="project" value="UniProtKB-UniRule"/>
</dbReference>
<dbReference type="GO" id="GO:0000049">
    <property type="term" value="F:tRNA binding"/>
    <property type="evidence" value="ECO:0007669"/>
    <property type="project" value="UniProtKB-UniRule"/>
</dbReference>
<dbReference type="GO" id="GO:0009022">
    <property type="term" value="F:tRNA nucleotidyltransferase activity"/>
    <property type="evidence" value="ECO:0007669"/>
    <property type="project" value="UniProtKB-UniRule"/>
</dbReference>
<dbReference type="GO" id="GO:0016075">
    <property type="term" value="P:rRNA catabolic process"/>
    <property type="evidence" value="ECO:0007669"/>
    <property type="project" value="UniProtKB-UniRule"/>
</dbReference>
<dbReference type="GO" id="GO:0006364">
    <property type="term" value="P:rRNA processing"/>
    <property type="evidence" value="ECO:0007669"/>
    <property type="project" value="UniProtKB-KW"/>
</dbReference>
<dbReference type="GO" id="GO:0008033">
    <property type="term" value="P:tRNA processing"/>
    <property type="evidence" value="ECO:0007669"/>
    <property type="project" value="UniProtKB-UniRule"/>
</dbReference>
<dbReference type="CDD" id="cd11362">
    <property type="entry name" value="RNase_PH_bact"/>
    <property type="match status" value="1"/>
</dbReference>
<dbReference type="FunFam" id="3.30.230.70:FF:000003">
    <property type="entry name" value="Ribonuclease PH"/>
    <property type="match status" value="1"/>
</dbReference>
<dbReference type="Gene3D" id="3.30.230.70">
    <property type="entry name" value="GHMP Kinase, N-terminal domain"/>
    <property type="match status" value="1"/>
</dbReference>
<dbReference type="HAMAP" id="MF_00564">
    <property type="entry name" value="RNase_PH"/>
    <property type="match status" value="1"/>
</dbReference>
<dbReference type="InterPro" id="IPR001247">
    <property type="entry name" value="ExoRNase_PH_dom1"/>
</dbReference>
<dbReference type="InterPro" id="IPR015847">
    <property type="entry name" value="ExoRNase_PH_dom2"/>
</dbReference>
<dbReference type="InterPro" id="IPR036345">
    <property type="entry name" value="ExoRNase_PH_dom2_sf"/>
</dbReference>
<dbReference type="InterPro" id="IPR027408">
    <property type="entry name" value="PNPase/RNase_PH_dom_sf"/>
</dbReference>
<dbReference type="InterPro" id="IPR020568">
    <property type="entry name" value="Ribosomal_Su5_D2-typ_SF"/>
</dbReference>
<dbReference type="InterPro" id="IPR050080">
    <property type="entry name" value="RNase_PH"/>
</dbReference>
<dbReference type="InterPro" id="IPR002381">
    <property type="entry name" value="RNase_PH_bac-type"/>
</dbReference>
<dbReference type="InterPro" id="IPR018336">
    <property type="entry name" value="RNase_PH_CS"/>
</dbReference>
<dbReference type="NCBIfam" id="TIGR01966">
    <property type="entry name" value="RNasePH"/>
    <property type="match status" value="1"/>
</dbReference>
<dbReference type="PANTHER" id="PTHR11953">
    <property type="entry name" value="EXOSOME COMPLEX COMPONENT"/>
    <property type="match status" value="1"/>
</dbReference>
<dbReference type="PANTHER" id="PTHR11953:SF0">
    <property type="entry name" value="EXOSOME COMPLEX COMPONENT RRP41"/>
    <property type="match status" value="1"/>
</dbReference>
<dbReference type="Pfam" id="PF01138">
    <property type="entry name" value="RNase_PH"/>
    <property type="match status" value="1"/>
</dbReference>
<dbReference type="Pfam" id="PF03725">
    <property type="entry name" value="RNase_PH_C"/>
    <property type="match status" value="1"/>
</dbReference>
<dbReference type="SUPFAM" id="SSF55666">
    <property type="entry name" value="Ribonuclease PH domain 2-like"/>
    <property type="match status" value="1"/>
</dbReference>
<dbReference type="SUPFAM" id="SSF54211">
    <property type="entry name" value="Ribosomal protein S5 domain 2-like"/>
    <property type="match status" value="1"/>
</dbReference>
<dbReference type="PROSITE" id="PS01277">
    <property type="entry name" value="RIBONUCLEASE_PH"/>
    <property type="match status" value="1"/>
</dbReference>
<organism>
    <name type="scientific">Brucella abortus (strain S19)</name>
    <dbReference type="NCBI Taxonomy" id="430066"/>
    <lineage>
        <taxon>Bacteria</taxon>
        <taxon>Pseudomonadati</taxon>
        <taxon>Pseudomonadota</taxon>
        <taxon>Alphaproteobacteria</taxon>
        <taxon>Hyphomicrobiales</taxon>
        <taxon>Brucellaceae</taxon>
        <taxon>Brucella/Ochrobactrum group</taxon>
        <taxon>Brucella</taxon>
    </lineage>
</organism>
<gene>
    <name evidence="1" type="primary">rph</name>
    <name type="ordered locus">BAbS19_I01630</name>
</gene>
<proteinExistence type="inferred from homology"/>
<sequence length="238" mass="25907">MRPSKRAADEMRAISFERGVSKHAEGSCLVKFGDTHVLCTASLEEKVPGWMRNTGKGWVTAEYGMLPRSTGERMRREAAAGKQGGRTQEIQRLIGRSLRAVVDMQALGEMQITVDCDVIQADGGTRTAAITGGWVALHECLRWMEARQMVRVEKVLKDHVAAISCGIYEGVPVLDLDYAEDSVAETDSNFVMTGKGGIVEIQGTAEGVPFSEEEFGALMKLARSGIDRLVSLQKMAVA</sequence>
<protein>
    <recommendedName>
        <fullName evidence="1">Ribonuclease PH</fullName>
        <shortName evidence="1">RNase PH</shortName>
        <ecNumber evidence="1">2.7.7.56</ecNumber>
    </recommendedName>
    <alternativeName>
        <fullName evidence="1">tRNA nucleotidyltransferase</fullName>
    </alternativeName>
</protein>
<accession>B2S8G4</accession>
<evidence type="ECO:0000255" key="1">
    <source>
        <dbReference type="HAMAP-Rule" id="MF_00564"/>
    </source>
</evidence>
<name>RNPH_BRUA1</name>
<comment type="function">
    <text evidence="1">Phosphorolytic 3'-5' exoribonuclease that plays an important role in tRNA 3'-end maturation. Removes nucleotide residues following the 3'-CCA terminus of tRNAs; can also add nucleotides to the ends of RNA molecules by using nucleoside diphosphates as substrates, but this may not be physiologically important. Probably plays a role in initiation of 16S rRNA degradation (leading to ribosome degradation) during starvation.</text>
</comment>
<comment type="catalytic activity">
    <reaction evidence="1">
        <text>tRNA(n+1) + phosphate = tRNA(n) + a ribonucleoside 5'-diphosphate</text>
        <dbReference type="Rhea" id="RHEA:10628"/>
        <dbReference type="Rhea" id="RHEA-COMP:17343"/>
        <dbReference type="Rhea" id="RHEA-COMP:17344"/>
        <dbReference type="ChEBI" id="CHEBI:43474"/>
        <dbReference type="ChEBI" id="CHEBI:57930"/>
        <dbReference type="ChEBI" id="CHEBI:173114"/>
        <dbReference type="EC" id="2.7.7.56"/>
    </reaction>
</comment>
<comment type="subunit">
    <text evidence="1">Homohexameric ring arranged as a trimer of dimers.</text>
</comment>
<comment type="similarity">
    <text evidence="1">Belongs to the RNase PH family.</text>
</comment>